<sequence>MPLNKRFTLTQYLIQERRRFPDARGDFNALILDVALACKAIARAVAFGELGGMLGNHDADAGGSINVQGETQKKLDVISNQYFTRMNEWGGHLAGMASEEMDDAYQIPAEHPRGKYLLVFDPLDGSSNIDVNVSVGSIFSILRAPQEAVESGRDVVEADFFQPGAEQVAAGYALYGPTTMLVLSVGNGVAGFTLDPMLGEFMLTHDKLQVPENTQEFAINASNSRFWEPPVKRYVDECLAGKTGPRDKDFNMRWIASMVAEAHRILMRGGVFLYPRDSKDAAKPGRLRLLYEANPIGFIMEQAGGRASTGREPMLGVQPTSLHQRIGLIFGSKNEVERIERYHAEPARAEMHNPLFAERSLFRS</sequence>
<comment type="catalytic activity">
    <reaction evidence="1">
        <text>beta-D-fructose 1,6-bisphosphate + H2O = beta-D-fructose 6-phosphate + phosphate</text>
        <dbReference type="Rhea" id="RHEA:11064"/>
        <dbReference type="ChEBI" id="CHEBI:15377"/>
        <dbReference type="ChEBI" id="CHEBI:32966"/>
        <dbReference type="ChEBI" id="CHEBI:43474"/>
        <dbReference type="ChEBI" id="CHEBI:57634"/>
        <dbReference type="EC" id="3.1.3.11"/>
    </reaction>
</comment>
<comment type="cofactor">
    <cofactor evidence="1">
        <name>Mg(2+)</name>
        <dbReference type="ChEBI" id="CHEBI:18420"/>
    </cofactor>
    <text evidence="1">Binds 2 magnesium ions per subunit.</text>
</comment>
<comment type="pathway">
    <text evidence="1">Carbohydrate biosynthesis; gluconeogenesis.</text>
</comment>
<comment type="subunit">
    <text evidence="1">Homotetramer.</text>
</comment>
<comment type="subcellular location">
    <subcellularLocation>
        <location evidence="1">Cytoplasm</location>
    </subcellularLocation>
</comment>
<comment type="similarity">
    <text evidence="1">Belongs to the FBPase class 1 family.</text>
</comment>
<name>F16A2_POLNA</name>
<proteinExistence type="inferred from homology"/>
<reference key="1">
    <citation type="journal article" date="2009" name="Environ. Microbiol.">
        <title>The genome of Polaromonas naphthalenivorans strain CJ2, isolated from coal tar-contaminated sediment, reveals physiological and metabolic versatility and evolution through extensive horizontal gene transfer.</title>
        <authorList>
            <person name="Yagi J.M."/>
            <person name="Sims D."/>
            <person name="Brettin T."/>
            <person name="Bruce D."/>
            <person name="Madsen E.L."/>
        </authorList>
    </citation>
    <scope>NUCLEOTIDE SEQUENCE [LARGE SCALE GENOMIC DNA]</scope>
    <source>
        <strain>CJ2</strain>
    </source>
</reference>
<evidence type="ECO:0000255" key="1">
    <source>
        <dbReference type="HAMAP-Rule" id="MF_01855"/>
    </source>
</evidence>
<protein>
    <recommendedName>
        <fullName evidence="1">Fructose-1,6-bisphosphatase class 1 2</fullName>
        <shortName evidence="1">FBPase class 1 2</shortName>
        <ecNumber evidence="1">3.1.3.11</ecNumber>
    </recommendedName>
    <alternativeName>
        <fullName evidence="1">D-fructose-1,6-bisphosphate 1-phosphohydrolase class 1 2</fullName>
    </alternativeName>
</protein>
<feature type="chain" id="PRO_0000364629" description="Fructose-1,6-bisphosphatase class 1 2">
    <location>
        <begin position="1"/>
        <end position="364"/>
    </location>
</feature>
<feature type="binding site" evidence="1">
    <location>
        <position position="99"/>
    </location>
    <ligand>
        <name>Mg(2+)</name>
        <dbReference type="ChEBI" id="CHEBI:18420"/>
        <label>1</label>
    </ligand>
</feature>
<feature type="binding site" evidence="1">
    <location>
        <position position="121"/>
    </location>
    <ligand>
        <name>Mg(2+)</name>
        <dbReference type="ChEBI" id="CHEBI:18420"/>
        <label>1</label>
    </ligand>
</feature>
<feature type="binding site" evidence="1">
    <location>
        <position position="121"/>
    </location>
    <ligand>
        <name>Mg(2+)</name>
        <dbReference type="ChEBI" id="CHEBI:18420"/>
        <label>2</label>
    </ligand>
</feature>
<feature type="binding site" evidence="1">
    <location>
        <position position="123"/>
    </location>
    <ligand>
        <name>Mg(2+)</name>
        <dbReference type="ChEBI" id="CHEBI:18420"/>
        <label>1</label>
    </ligand>
</feature>
<feature type="binding site" evidence="1">
    <location>
        <begin position="124"/>
        <end position="127"/>
    </location>
    <ligand>
        <name>substrate</name>
    </ligand>
</feature>
<feature type="binding site" evidence="1">
    <location>
        <position position="124"/>
    </location>
    <ligand>
        <name>Mg(2+)</name>
        <dbReference type="ChEBI" id="CHEBI:18420"/>
        <label>2</label>
    </ligand>
</feature>
<feature type="binding site" evidence="1">
    <location>
        <position position="220"/>
    </location>
    <ligand>
        <name>substrate</name>
    </ligand>
</feature>
<feature type="binding site" evidence="1">
    <location>
        <position position="292"/>
    </location>
    <ligand>
        <name>Mg(2+)</name>
        <dbReference type="ChEBI" id="CHEBI:18420"/>
        <label>2</label>
    </ligand>
</feature>
<organism>
    <name type="scientific">Polaromonas naphthalenivorans (strain CJ2)</name>
    <dbReference type="NCBI Taxonomy" id="365044"/>
    <lineage>
        <taxon>Bacteria</taxon>
        <taxon>Pseudomonadati</taxon>
        <taxon>Pseudomonadota</taxon>
        <taxon>Betaproteobacteria</taxon>
        <taxon>Burkholderiales</taxon>
        <taxon>Comamonadaceae</taxon>
        <taxon>Polaromonas</taxon>
    </lineage>
</organism>
<dbReference type="EC" id="3.1.3.11" evidence="1"/>
<dbReference type="EMBL" id="CP000529">
    <property type="protein sequence ID" value="ABM37291.1"/>
    <property type="molecule type" value="Genomic_DNA"/>
</dbReference>
<dbReference type="RefSeq" id="WP_011801372.1">
    <property type="nucleotide sequence ID" value="NC_008781.1"/>
</dbReference>
<dbReference type="SMR" id="A1VNR3"/>
<dbReference type="STRING" id="365044.Pnap_1982"/>
<dbReference type="KEGG" id="pna:Pnap_1982"/>
<dbReference type="eggNOG" id="COG0158">
    <property type="taxonomic scope" value="Bacteria"/>
</dbReference>
<dbReference type="HOGENOM" id="CLU_039977_0_0_4"/>
<dbReference type="OrthoDB" id="9806756at2"/>
<dbReference type="UniPathway" id="UPA00138"/>
<dbReference type="Proteomes" id="UP000000644">
    <property type="component" value="Chromosome"/>
</dbReference>
<dbReference type="GO" id="GO:0005829">
    <property type="term" value="C:cytosol"/>
    <property type="evidence" value="ECO:0007669"/>
    <property type="project" value="TreeGrafter"/>
</dbReference>
<dbReference type="GO" id="GO:0042132">
    <property type="term" value="F:fructose 1,6-bisphosphate 1-phosphatase activity"/>
    <property type="evidence" value="ECO:0007669"/>
    <property type="project" value="UniProtKB-UniRule"/>
</dbReference>
<dbReference type="GO" id="GO:0000287">
    <property type="term" value="F:magnesium ion binding"/>
    <property type="evidence" value="ECO:0007669"/>
    <property type="project" value="UniProtKB-UniRule"/>
</dbReference>
<dbReference type="GO" id="GO:0030388">
    <property type="term" value="P:fructose 1,6-bisphosphate metabolic process"/>
    <property type="evidence" value="ECO:0007669"/>
    <property type="project" value="TreeGrafter"/>
</dbReference>
<dbReference type="GO" id="GO:0006002">
    <property type="term" value="P:fructose 6-phosphate metabolic process"/>
    <property type="evidence" value="ECO:0007669"/>
    <property type="project" value="TreeGrafter"/>
</dbReference>
<dbReference type="GO" id="GO:0006000">
    <property type="term" value="P:fructose metabolic process"/>
    <property type="evidence" value="ECO:0007669"/>
    <property type="project" value="TreeGrafter"/>
</dbReference>
<dbReference type="GO" id="GO:0006094">
    <property type="term" value="P:gluconeogenesis"/>
    <property type="evidence" value="ECO:0007669"/>
    <property type="project" value="UniProtKB-UniRule"/>
</dbReference>
<dbReference type="GO" id="GO:0005986">
    <property type="term" value="P:sucrose biosynthetic process"/>
    <property type="evidence" value="ECO:0007669"/>
    <property type="project" value="TreeGrafter"/>
</dbReference>
<dbReference type="CDD" id="cd00354">
    <property type="entry name" value="FBPase"/>
    <property type="match status" value="1"/>
</dbReference>
<dbReference type="FunFam" id="3.30.540.10:FF:000002">
    <property type="entry name" value="Fructose-1,6-bisphosphatase class 1"/>
    <property type="match status" value="1"/>
</dbReference>
<dbReference type="FunFam" id="3.40.190.80:FF:000011">
    <property type="entry name" value="Fructose-1,6-bisphosphatase class 1"/>
    <property type="match status" value="1"/>
</dbReference>
<dbReference type="Gene3D" id="3.40.190.80">
    <property type="match status" value="1"/>
</dbReference>
<dbReference type="Gene3D" id="3.30.540.10">
    <property type="entry name" value="Fructose-1,6-Bisphosphatase, subunit A, domain 1"/>
    <property type="match status" value="1"/>
</dbReference>
<dbReference type="HAMAP" id="MF_01855">
    <property type="entry name" value="FBPase_class1"/>
    <property type="match status" value="1"/>
</dbReference>
<dbReference type="InterPro" id="IPR044015">
    <property type="entry name" value="FBPase_C_dom"/>
</dbReference>
<dbReference type="InterPro" id="IPR000146">
    <property type="entry name" value="FBPase_class-1"/>
</dbReference>
<dbReference type="InterPro" id="IPR033391">
    <property type="entry name" value="FBPase_N"/>
</dbReference>
<dbReference type="InterPro" id="IPR028343">
    <property type="entry name" value="FBPtase"/>
</dbReference>
<dbReference type="InterPro" id="IPR020548">
    <property type="entry name" value="Fructose_bisphosphatase_AS"/>
</dbReference>
<dbReference type="NCBIfam" id="NF006778">
    <property type="entry name" value="PRK09293.1-1"/>
    <property type="match status" value="1"/>
</dbReference>
<dbReference type="NCBIfam" id="NF006779">
    <property type="entry name" value="PRK09293.1-3"/>
    <property type="match status" value="1"/>
</dbReference>
<dbReference type="NCBIfam" id="NF006780">
    <property type="entry name" value="PRK09293.1-4"/>
    <property type="match status" value="1"/>
</dbReference>
<dbReference type="PANTHER" id="PTHR11556">
    <property type="entry name" value="FRUCTOSE-1,6-BISPHOSPHATASE-RELATED"/>
    <property type="match status" value="1"/>
</dbReference>
<dbReference type="PANTHER" id="PTHR11556:SF35">
    <property type="entry name" value="SEDOHEPTULOSE-1,7-BISPHOSPHATASE, CHLOROPLASTIC"/>
    <property type="match status" value="1"/>
</dbReference>
<dbReference type="Pfam" id="PF00316">
    <property type="entry name" value="FBPase"/>
    <property type="match status" value="1"/>
</dbReference>
<dbReference type="Pfam" id="PF18913">
    <property type="entry name" value="FBPase_C"/>
    <property type="match status" value="1"/>
</dbReference>
<dbReference type="PIRSF" id="PIRSF500210">
    <property type="entry name" value="FBPtase"/>
    <property type="match status" value="1"/>
</dbReference>
<dbReference type="PIRSF" id="PIRSF000904">
    <property type="entry name" value="FBPtase_SBPase"/>
    <property type="match status" value="1"/>
</dbReference>
<dbReference type="PRINTS" id="PR00115">
    <property type="entry name" value="F16BPHPHTASE"/>
</dbReference>
<dbReference type="SUPFAM" id="SSF56655">
    <property type="entry name" value="Carbohydrate phosphatase"/>
    <property type="match status" value="1"/>
</dbReference>
<dbReference type="PROSITE" id="PS00124">
    <property type="entry name" value="FBPASE"/>
    <property type="match status" value="1"/>
</dbReference>
<gene>
    <name evidence="1" type="primary">fbp2</name>
    <name type="ordered locus">Pnap_1982</name>
</gene>
<accession>A1VNR3</accession>
<keyword id="KW-0119">Carbohydrate metabolism</keyword>
<keyword id="KW-0963">Cytoplasm</keyword>
<keyword id="KW-0378">Hydrolase</keyword>
<keyword id="KW-0460">Magnesium</keyword>
<keyword id="KW-0479">Metal-binding</keyword>
<keyword id="KW-1185">Reference proteome</keyword>